<comment type="function">
    <text evidence="1">Part of the ABC transporter complex PstSACB involved in phosphate import. Responsible for energy coupling to the transport system.</text>
</comment>
<comment type="catalytic activity">
    <reaction evidence="1">
        <text>phosphate(out) + ATP + H2O = ADP + 2 phosphate(in) + H(+)</text>
        <dbReference type="Rhea" id="RHEA:24440"/>
        <dbReference type="ChEBI" id="CHEBI:15377"/>
        <dbReference type="ChEBI" id="CHEBI:15378"/>
        <dbReference type="ChEBI" id="CHEBI:30616"/>
        <dbReference type="ChEBI" id="CHEBI:43474"/>
        <dbReference type="ChEBI" id="CHEBI:456216"/>
        <dbReference type="EC" id="7.3.2.1"/>
    </reaction>
</comment>
<comment type="subunit">
    <text evidence="1">The complex is composed of two ATP-binding proteins (PstB), two transmembrane proteins (PstC and PstA) and a solute-binding protein (PstS).</text>
</comment>
<comment type="subcellular location">
    <subcellularLocation>
        <location evidence="1">Cell inner membrane</location>
        <topology evidence="1">Peripheral membrane protein</topology>
    </subcellularLocation>
</comment>
<comment type="similarity">
    <text evidence="1">Belongs to the ABC transporter superfamily. Phosphate importer (TC 3.A.1.7) family.</text>
</comment>
<protein>
    <recommendedName>
        <fullName evidence="1">Phosphate import ATP-binding protein PstB</fullName>
        <ecNumber evidence="1">7.3.2.1</ecNumber>
    </recommendedName>
    <alternativeName>
        <fullName evidence="1">ABC phosphate transporter</fullName>
    </alternativeName>
    <alternativeName>
        <fullName evidence="1">Phosphate-transporting ATPase</fullName>
    </alternativeName>
</protein>
<name>PSTB_METCA</name>
<keyword id="KW-0067">ATP-binding</keyword>
<keyword id="KW-0997">Cell inner membrane</keyword>
<keyword id="KW-1003">Cell membrane</keyword>
<keyword id="KW-0472">Membrane</keyword>
<keyword id="KW-0547">Nucleotide-binding</keyword>
<keyword id="KW-0592">Phosphate transport</keyword>
<keyword id="KW-1185">Reference proteome</keyword>
<keyword id="KW-1278">Translocase</keyword>
<keyword id="KW-0813">Transport</keyword>
<reference key="1">
    <citation type="journal article" date="2004" name="PLoS Biol.">
        <title>Genomic insights into methanotrophy: the complete genome sequence of Methylococcus capsulatus (Bath).</title>
        <authorList>
            <person name="Ward N.L."/>
            <person name="Larsen O."/>
            <person name="Sakwa J."/>
            <person name="Bruseth L."/>
            <person name="Khouri H.M."/>
            <person name="Durkin A.S."/>
            <person name="Dimitrov G."/>
            <person name="Jiang L."/>
            <person name="Scanlan D."/>
            <person name="Kang K.H."/>
            <person name="Lewis M.R."/>
            <person name="Nelson K.E."/>
            <person name="Methe B.A."/>
            <person name="Wu M."/>
            <person name="Heidelberg J.F."/>
            <person name="Paulsen I.T."/>
            <person name="Fouts D.E."/>
            <person name="Ravel J."/>
            <person name="Tettelin H."/>
            <person name="Ren Q."/>
            <person name="Read T.D."/>
            <person name="DeBoy R.T."/>
            <person name="Seshadri R."/>
            <person name="Salzberg S.L."/>
            <person name="Jensen H.B."/>
            <person name="Birkeland N.K."/>
            <person name="Nelson W.C."/>
            <person name="Dodson R.J."/>
            <person name="Grindhaug S.H."/>
            <person name="Holt I.E."/>
            <person name="Eidhammer I."/>
            <person name="Jonasen I."/>
            <person name="Vanaken S."/>
            <person name="Utterback T.R."/>
            <person name="Feldblyum T.V."/>
            <person name="Fraser C.M."/>
            <person name="Lillehaug J.R."/>
            <person name="Eisen J.A."/>
        </authorList>
    </citation>
    <scope>NUCLEOTIDE SEQUENCE [LARGE SCALE GENOMIC DNA]</scope>
    <source>
        <strain>ATCC 33009 / NCIMB 11132 / Bath</strain>
    </source>
</reference>
<evidence type="ECO:0000255" key="1">
    <source>
        <dbReference type="HAMAP-Rule" id="MF_01702"/>
    </source>
</evidence>
<proteinExistence type="inferred from homology"/>
<dbReference type="EC" id="7.3.2.1" evidence="1"/>
<dbReference type="EMBL" id="AE017282">
    <property type="protein sequence ID" value="AAU92653.1"/>
    <property type="molecule type" value="Genomic_DNA"/>
</dbReference>
<dbReference type="SMR" id="Q609Z8"/>
<dbReference type="STRING" id="243233.MCA1074"/>
<dbReference type="KEGG" id="mca:MCA1074"/>
<dbReference type="eggNOG" id="COG1117">
    <property type="taxonomic scope" value="Bacteria"/>
</dbReference>
<dbReference type="HOGENOM" id="CLU_000604_1_22_6"/>
<dbReference type="Proteomes" id="UP000006821">
    <property type="component" value="Chromosome"/>
</dbReference>
<dbReference type="GO" id="GO:0005886">
    <property type="term" value="C:plasma membrane"/>
    <property type="evidence" value="ECO:0007669"/>
    <property type="project" value="UniProtKB-SubCell"/>
</dbReference>
<dbReference type="GO" id="GO:0005524">
    <property type="term" value="F:ATP binding"/>
    <property type="evidence" value="ECO:0007669"/>
    <property type="project" value="UniProtKB-KW"/>
</dbReference>
<dbReference type="GO" id="GO:0016887">
    <property type="term" value="F:ATP hydrolysis activity"/>
    <property type="evidence" value="ECO:0007669"/>
    <property type="project" value="InterPro"/>
</dbReference>
<dbReference type="GO" id="GO:0015415">
    <property type="term" value="F:ATPase-coupled phosphate ion transmembrane transporter activity"/>
    <property type="evidence" value="ECO:0007669"/>
    <property type="project" value="UniProtKB-EC"/>
</dbReference>
<dbReference type="GO" id="GO:0035435">
    <property type="term" value="P:phosphate ion transmembrane transport"/>
    <property type="evidence" value="ECO:0007669"/>
    <property type="project" value="InterPro"/>
</dbReference>
<dbReference type="CDD" id="cd03260">
    <property type="entry name" value="ABC_PstB_phosphate_transporter"/>
    <property type="match status" value="1"/>
</dbReference>
<dbReference type="Gene3D" id="3.40.50.300">
    <property type="entry name" value="P-loop containing nucleotide triphosphate hydrolases"/>
    <property type="match status" value="1"/>
</dbReference>
<dbReference type="InterPro" id="IPR003593">
    <property type="entry name" value="AAA+_ATPase"/>
</dbReference>
<dbReference type="InterPro" id="IPR003439">
    <property type="entry name" value="ABC_transporter-like_ATP-bd"/>
</dbReference>
<dbReference type="InterPro" id="IPR017871">
    <property type="entry name" value="ABC_transporter-like_CS"/>
</dbReference>
<dbReference type="InterPro" id="IPR027417">
    <property type="entry name" value="P-loop_NTPase"/>
</dbReference>
<dbReference type="InterPro" id="IPR005670">
    <property type="entry name" value="PstB-like"/>
</dbReference>
<dbReference type="NCBIfam" id="TIGR00972">
    <property type="entry name" value="3a0107s01c2"/>
    <property type="match status" value="1"/>
</dbReference>
<dbReference type="PANTHER" id="PTHR43423">
    <property type="entry name" value="ABC TRANSPORTER I FAMILY MEMBER 17"/>
    <property type="match status" value="1"/>
</dbReference>
<dbReference type="PANTHER" id="PTHR43423:SF1">
    <property type="entry name" value="ABC TRANSPORTER I FAMILY MEMBER 17"/>
    <property type="match status" value="1"/>
</dbReference>
<dbReference type="Pfam" id="PF00005">
    <property type="entry name" value="ABC_tran"/>
    <property type="match status" value="1"/>
</dbReference>
<dbReference type="SMART" id="SM00382">
    <property type="entry name" value="AAA"/>
    <property type="match status" value="1"/>
</dbReference>
<dbReference type="SUPFAM" id="SSF52540">
    <property type="entry name" value="P-loop containing nucleoside triphosphate hydrolases"/>
    <property type="match status" value="1"/>
</dbReference>
<dbReference type="PROSITE" id="PS00211">
    <property type="entry name" value="ABC_TRANSPORTER_1"/>
    <property type="match status" value="1"/>
</dbReference>
<dbReference type="PROSITE" id="PS50893">
    <property type="entry name" value="ABC_TRANSPORTER_2"/>
    <property type="match status" value="1"/>
</dbReference>
<dbReference type="PROSITE" id="PS51238">
    <property type="entry name" value="PSTB"/>
    <property type="match status" value="1"/>
</dbReference>
<organism>
    <name type="scientific">Methylococcus capsulatus (strain ATCC 33009 / NCIMB 11132 / Bath)</name>
    <dbReference type="NCBI Taxonomy" id="243233"/>
    <lineage>
        <taxon>Bacteria</taxon>
        <taxon>Pseudomonadati</taxon>
        <taxon>Pseudomonadota</taxon>
        <taxon>Gammaproteobacteria</taxon>
        <taxon>Methylococcales</taxon>
        <taxon>Methylococcaceae</taxon>
        <taxon>Methylococcus</taxon>
    </lineage>
</organism>
<accession>Q609Z8</accession>
<feature type="chain" id="PRO_0000092836" description="Phosphate import ATP-binding protein PstB">
    <location>
        <begin position="1"/>
        <end position="247"/>
    </location>
</feature>
<feature type="domain" description="ABC transporter" evidence="1">
    <location>
        <begin position="2"/>
        <end position="242"/>
    </location>
</feature>
<feature type="binding site" evidence="1">
    <location>
        <begin position="32"/>
        <end position="39"/>
    </location>
    <ligand>
        <name>ATP</name>
        <dbReference type="ChEBI" id="CHEBI:30616"/>
    </ligand>
</feature>
<sequence>MCRDVNVYYGEKHAIQNVSLDVGHNEVIALIGPSGCGKSTFLRCLNRMNDTIVGCRVTGSIRLDGQDIYDGGLDVVPLRAQVGMVFQKPNPFPKSIYENVAYGPKIHGLANSKAELEEIVESSLRRAGLWDEVKDDLAKPGTSLSGGQQQRLCIARTIAVSPEVILMDEPCSALDPIATAKIEQLIDELRELYTIAIVTHSMQQAARVSQRTAYFHLGRLIEVGDTAQVFTNPRHPLTEDYITGRFG</sequence>
<gene>
    <name evidence="1" type="primary">pstB</name>
    <name type="ordered locus">MCA1074</name>
</gene>